<dbReference type="EMBL" id="CU329671">
    <property type="protein sequence ID" value="CAB36879.1"/>
    <property type="molecule type" value="Genomic_DNA"/>
</dbReference>
<dbReference type="PIR" id="T40706">
    <property type="entry name" value="T40706"/>
</dbReference>
<dbReference type="RefSeq" id="NP_595650.1">
    <property type="nucleotide sequence ID" value="NM_001021544.2"/>
</dbReference>
<dbReference type="SMR" id="O94700"/>
<dbReference type="BioGRID" id="277706">
    <property type="interactions" value="17"/>
</dbReference>
<dbReference type="FunCoup" id="O94700">
    <property type="interactions" value="709"/>
</dbReference>
<dbReference type="STRING" id="284812.O94700"/>
<dbReference type="iPTMnet" id="O94700"/>
<dbReference type="PaxDb" id="4896-SPBC83.17.1"/>
<dbReference type="EnsemblFungi" id="SPBC83.17.1">
    <property type="protein sequence ID" value="SPBC83.17.1:pep"/>
    <property type="gene ID" value="SPBC83.17"/>
</dbReference>
<dbReference type="GeneID" id="2541192"/>
<dbReference type="KEGG" id="spo:2541192"/>
<dbReference type="PomBase" id="SPBC83.17">
    <property type="gene designation" value="mbf1"/>
</dbReference>
<dbReference type="VEuPathDB" id="FungiDB:SPBC83.17"/>
<dbReference type="eggNOG" id="KOG3398">
    <property type="taxonomic scope" value="Eukaryota"/>
</dbReference>
<dbReference type="HOGENOM" id="CLU_112609_0_1_1"/>
<dbReference type="InParanoid" id="O94700"/>
<dbReference type="OMA" id="GKNKSCK"/>
<dbReference type="PhylomeDB" id="O94700"/>
<dbReference type="PRO" id="PR:O94700"/>
<dbReference type="Proteomes" id="UP000002485">
    <property type="component" value="Chromosome II"/>
</dbReference>
<dbReference type="GO" id="GO:0005829">
    <property type="term" value="C:cytosol"/>
    <property type="evidence" value="ECO:0007005"/>
    <property type="project" value="PomBase"/>
</dbReference>
<dbReference type="GO" id="GO:0005730">
    <property type="term" value="C:nucleolus"/>
    <property type="evidence" value="ECO:0007005"/>
    <property type="project" value="PomBase"/>
</dbReference>
<dbReference type="GO" id="GO:0005634">
    <property type="term" value="C:nucleus"/>
    <property type="evidence" value="ECO:0007005"/>
    <property type="project" value="PomBase"/>
</dbReference>
<dbReference type="GO" id="GO:0003677">
    <property type="term" value="F:DNA binding"/>
    <property type="evidence" value="ECO:0000255"/>
    <property type="project" value="PomBase"/>
</dbReference>
<dbReference type="GO" id="GO:0003713">
    <property type="term" value="F:transcription coactivator activity"/>
    <property type="evidence" value="ECO:0000266"/>
    <property type="project" value="PomBase"/>
</dbReference>
<dbReference type="GO" id="GO:1990145">
    <property type="term" value="P:maintenance of translational fidelity"/>
    <property type="evidence" value="ECO:0000304"/>
    <property type="project" value="PomBase"/>
</dbReference>
<dbReference type="GO" id="GO:0045944">
    <property type="term" value="P:positive regulation of transcription by RNA polymerase II"/>
    <property type="evidence" value="ECO:0000266"/>
    <property type="project" value="PomBase"/>
</dbReference>
<dbReference type="CDD" id="cd00093">
    <property type="entry name" value="HTH_XRE"/>
    <property type="match status" value="1"/>
</dbReference>
<dbReference type="FunFam" id="1.10.260.40:FF:000018">
    <property type="entry name" value="Multiprotein bridging factor 1"/>
    <property type="match status" value="1"/>
</dbReference>
<dbReference type="Gene3D" id="1.10.260.40">
    <property type="entry name" value="lambda repressor-like DNA-binding domains"/>
    <property type="match status" value="1"/>
</dbReference>
<dbReference type="InterPro" id="IPR001387">
    <property type="entry name" value="Cro/C1-type_HTH"/>
</dbReference>
<dbReference type="InterPro" id="IPR010982">
    <property type="entry name" value="Lambda_DNA-bd_dom_sf"/>
</dbReference>
<dbReference type="InterPro" id="IPR013729">
    <property type="entry name" value="MBF1_N"/>
</dbReference>
<dbReference type="PANTHER" id="PTHR10245:SF15">
    <property type="entry name" value="ENDOTHELIAL DIFFERENTIATION-RELATED FACTOR 1"/>
    <property type="match status" value="1"/>
</dbReference>
<dbReference type="PANTHER" id="PTHR10245">
    <property type="entry name" value="ENDOTHELIAL DIFFERENTIATION-RELATED FACTOR 1 MULTIPROTEIN BRIDGING FACTOR 1"/>
    <property type="match status" value="1"/>
</dbReference>
<dbReference type="Pfam" id="PF01381">
    <property type="entry name" value="HTH_3"/>
    <property type="match status" value="1"/>
</dbReference>
<dbReference type="Pfam" id="PF08523">
    <property type="entry name" value="MBF1"/>
    <property type="match status" value="1"/>
</dbReference>
<dbReference type="SMART" id="SM00530">
    <property type="entry name" value="HTH_XRE"/>
    <property type="match status" value="1"/>
</dbReference>
<dbReference type="SUPFAM" id="SSF47413">
    <property type="entry name" value="lambda repressor-like DNA-binding domains"/>
    <property type="match status" value="1"/>
</dbReference>
<dbReference type="PROSITE" id="PS50943">
    <property type="entry name" value="HTH_CROC1"/>
    <property type="match status" value="1"/>
</dbReference>
<protein>
    <recommendedName>
        <fullName>Multiprotein-bridging factor 1</fullName>
    </recommendedName>
</protein>
<evidence type="ECO:0000250" key="1">
    <source>
        <dbReference type="UniProtKB" id="O14467"/>
    </source>
</evidence>
<evidence type="ECO:0000255" key="2">
    <source>
        <dbReference type="PROSITE-ProRule" id="PRU00257"/>
    </source>
</evidence>
<evidence type="ECO:0000256" key="3">
    <source>
        <dbReference type="SAM" id="MobiDB-lite"/>
    </source>
</evidence>
<evidence type="ECO:0000305" key="4"/>
<feature type="chain" id="PRO_0000149812" description="Multiprotein-bridging factor 1">
    <location>
        <begin position="1"/>
        <end position="148"/>
    </location>
</feature>
<feature type="domain" description="HTH cro/C1-type" evidence="2">
    <location>
        <begin position="82"/>
        <end position="136"/>
    </location>
</feature>
<feature type="DNA-binding region" description="H-T-H motif" evidence="2">
    <location>
        <begin position="93"/>
        <end position="112"/>
    </location>
</feature>
<feature type="region of interest" description="Disordered" evidence="3">
    <location>
        <begin position="1"/>
        <end position="97"/>
    </location>
</feature>
<name>MBF1_SCHPO</name>
<comment type="function">
    <text evidence="1">Transcriptional coactivator that stimulates GCN4-dependent transcriptional activity by bridging the DNA-binding region of GCN4 and TBP (SPT15), thereby recruiting TBP to GCN4-bound promoters. Involved in induction of the ribosome quality control (RQC) pathway; a pathway that degrades nascent peptide chains during problematic translation. Required to prevent stalled ribosomes from frameshifting.</text>
</comment>
<comment type="similarity">
    <text evidence="4">Belongs to the MBF1 family.</text>
</comment>
<proteinExistence type="inferred from homology"/>
<gene>
    <name type="primary">mbf1</name>
    <name type="ORF">SPBC83.17</name>
</gene>
<accession>O94700</accession>
<keyword id="KW-0010">Activator</keyword>
<keyword id="KW-0238">DNA-binding</keyword>
<keyword id="KW-1185">Reference proteome</keyword>
<keyword id="KW-0804">Transcription</keyword>
<keyword id="KW-0805">Transcription regulation</keyword>
<sequence length="148" mass="15979">MSDWDTVTKIGSRAGPGARTHVAKTQSQINSARRAGAIVGTEKKYATGNKSQDPAGQHLTKIDRENEVKPPSTTGRSVAQAIQKGRQAKGWAQKDLSQRINEKPQVVNDYESGRAIPNQQVLSKMERALGIKLRGQNIGAPLGGPKKK</sequence>
<organism>
    <name type="scientific">Schizosaccharomyces pombe (strain 972 / ATCC 24843)</name>
    <name type="common">Fission yeast</name>
    <dbReference type="NCBI Taxonomy" id="284812"/>
    <lineage>
        <taxon>Eukaryota</taxon>
        <taxon>Fungi</taxon>
        <taxon>Dikarya</taxon>
        <taxon>Ascomycota</taxon>
        <taxon>Taphrinomycotina</taxon>
        <taxon>Schizosaccharomycetes</taxon>
        <taxon>Schizosaccharomycetales</taxon>
        <taxon>Schizosaccharomycetaceae</taxon>
        <taxon>Schizosaccharomyces</taxon>
    </lineage>
</organism>
<reference key="1">
    <citation type="journal article" date="2002" name="Nature">
        <title>The genome sequence of Schizosaccharomyces pombe.</title>
        <authorList>
            <person name="Wood V."/>
            <person name="Gwilliam R."/>
            <person name="Rajandream M.A."/>
            <person name="Lyne M.H."/>
            <person name="Lyne R."/>
            <person name="Stewart A."/>
            <person name="Sgouros J.G."/>
            <person name="Peat N."/>
            <person name="Hayles J."/>
            <person name="Baker S.G."/>
            <person name="Basham D."/>
            <person name="Bowman S."/>
            <person name="Brooks K."/>
            <person name="Brown D."/>
            <person name="Brown S."/>
            <person name="Chillingworth T."/>
            <person name="Churcher C.M."/>
            <person name="Collins M."/>
            <person name="Connor R."/>
            <person name="Cronin A."/>
            <person name="Davis P."/>
            <person name="Feltwell T."/>
            <person name="Fraser A."/>
            <person name="Gentles S."/>
            <person name="Goble A."/>
            <person name="Hamlin N."/>
            <person name="Harris D.E."/>
            <person name="Hidalgo J."/>
            <person name="Hodgson G."/>
            <person name="Holroyd S."/>
            <person name="Hornsby T."/>
            <person name="Howarth S."/>
            <person name="Huckle E.J."/>
            <person name="Hunt S."/>
            <person name="Jagels K."/>
            <person name="James K.D."/>
            <person name="Jones L."/>
            <person name="Jones M."/>
            <person name="Leather S."/>
            <person name="McDonald S."/>
            <person name="McLean J."/>
            <person name="Mooney P."/>
            <person name="Moule S."/>
            <person name="Mungall K.L."/>
            <person name="Murphy L.D."/>
            <person name="Niblett D."/>
            <person name="Odell C."/>
            <person name="Oliver K."/>
            <person name="O'Neil S."/>
            <person name="Pearson D."/>
            <person name="Quail M.A."/>
            <person name="Rabbinowitsch E."/>
            <person name="Rutherford K.M."/>
            <person name="Rutter S."/>
            <person name="Saunders D."/>
            <person name="Seeger K."/>
            <person name="Sharp S."/>
            <person name="Skelton J."/>
            <person name="Simmonds M.N."/>
            <person name="Squares R."/>
            <person name="Squares S."/>
            <person name="Stevens K."/>
            <person name="Taylor K."/>
            <person name="Taylor R.G."/>
            <person name="Tivey A."/>
            <person name="Walsh S.V."/>
            <person name="Warren T."/>
            <person name="Whitehead S."/>
            <person name="Woodward J.R."/>
            <person name="Volckaert G."/>
            <person name="Aert R."/>
            <person name="Robben J."/>
            <person name="Grymonprez B."/>
            <person name="Weltjens I."/>
            <person name="Vanstreels E."/>
            <person name="Rieger M."/>
            <person name="Schaefer M."/>
            <person name="Mueller-Auer S."/>
            <person name="Gabel C."/>
            <person name="Fuchs M."/>
            <person name="Duesterhoeft A."/>
            <person name="Fritzc C."/>
            <person name="Holzer E."/>
            <person name="Moestl D."/>
            <person name="Hilbert H."/>
            <person name="Borzym K."/>
            <person name="Langer I."/>
            <person name="Beck A."/>
            <person name="Lehrach H."/>
            <person name="Reinhardt R."/>
            <person name="Pohl T.M."/>
            <person name="Eger P."/>
            <person name="Zimmermann W."/>
            <person name="Wedler H."/>
            <person name="Wambutt R."/>
            <person name="Purnelle B."/>
            <person name="Goffeau A."/>
            <person name="Cadieu E."/>
            <person name="Dreano S."/>
            <person name="Gloux S."/>
            <person name="Lelaure V."/>
            <person name="Mottier S."/>
            <person name="Galibert F."/>
            <person name="Aves S.J."/>
            <person name="Xiang Z."/>
            <person name="Hunt C."/>
            <person name="Moore K."/>
            <person name="Hurst S.M."/>
            <person name="Lucas M."/>
            <person name="Rochet M."/>
            <person name="Gaillardin C."/>
            <person name="Tallada V.A."/>
            <person name="Garzon A."/>
            <person name="Thode G."/>
            <person name="Daga R.R."/>
            <person name="Cruzado L."/>
            <person name="Jimenez J."/>
            <person name="Sanchez M."/>
            <person name="del Rey F."/>
            <person name="Benito J."/>
            <person name="Dominguez A."/>
            <person name="Revuelta J.L."/>
            <person name="Moreno S."/>
            <person name="Armstrong J."/>
            <person name="Forsburg S.L."/>
            <person name="Cerutti L."/>
            <person name="Lowe T."/>
            <person name="McCombie W.R."/>
            <person name="Paulsen I."/>
            <person name="Potashkin J."/>
            <person name="Shpakovski G.V."/>
            <person name="Ussery D."/>
            <person name="Barrell B.G."/>
            <person name="Nurse P."/>
        </authorList>
    </citation>
    <scope>NUCLEOTIDE SEQUENCE [LARGE SCALE GENOMIC DNA]</scope>
    <source>
        <strain>972 / ATCC 24843</strain>
    </source>
</reference>